<organism>
    <name type="scientific">Streptococcus agalactiae serotype V (strain ATCC BAA-611 / 2603 V/R)</name>
    <dbReference type="NCBI Taxonomy" id="208435"/>
    <lineage>
        <taxon>Bacteria</taxon>
        <taxon>Bacillati</taxon>
        <taxon>Bacillota</taxon>
        <taxon>Bacilli</taxon>
        <taxon>Lactobacillales</taxon>
        <taxon>Streptococcaceae</taxon>
        <taxon>Streptococcus</taxon>
    </lineage>
</organism>
<sequence length="194" mass="21713">MTYLGSIEALLFVAGEDGLSLRQMAELLSLTPSALIQQLEKLAKRYEEDDDSSLLLLETAQTYKLVTKDSYMTLLRDYAKAPINQSLSRASLEVLSIIAYKQPITRIEIDDIRGVNSSGAITRLIAFGLIKEAGKKEVLGRPNLYETTNYFLDYMGINQLDDLIDASSIELVDEEVSLFSMDSINTEDKENNEN</sequence>
<proteinExistence type="inferred from homology"/>
<evidence type="ECO:0000255" key="1">
    <source>
        <dbReference type="HAMAP-Rule" id="MF_01804"/>
    </source>
</evidence>
<name>SCPB_STRA5</name>
<comment type="function">
    <text evidence="1">Participates in chromosomal partition during cell division. May act via the formation of a condensin-like complex containing Smc and ScpA that pull DNA away from mid-cell into both cell halves.</text>
</comment>
<comment type="subunit">
    <text evidence="1">Homodimer. Homodimerization may be required to stabilize the binding of ScpA to the Smc head domains. Component of a cohesin-like complex composed of ScpA, ScpB and the Smc homodimer, in which ScpA and ScpB bind to the head domain of Smc. The presence of the three proteins is required for the association of the complex with DNA.</text>
</comment>
<comment type="subcellular location">
    <subcellularLocation>
        <location evidence="1">Cytoplasm</location>
    </subcellularLocation>
    <text evidence="1">Associated with two foci at the outer edges of the nucleoid region in young cells, and at four foci within both cell halves in older cells.</text>
</comment>
<comment type="similarity">
    <text evidence="1">Belongs to the ScpB family.</text>
</comment>
<feature type="chain" id="PRO_0000211156" description="Segregation and condensation protein B">
    <location>
        <begin position="1"/>
        <end position="194"/>
    </location>
</feature>
<protein>
    <recommendedName>
        <fullName evidence="1">Segregation and condensation protein B</fullName>
    </recommendedName>
</protein>
<reference key="1">
    <citation type="journal article" date="2002" name="Proc. Natl. Acad. Sci. U.S.A.">
        <title>Complete genome sequence and comparative genomic analysis of an emerging human pathogen, serotype V Streptococcus agalactiae.</title>
        <authorList>
            <person name="Tettelin H."/>
            <person name="Masignani V."/>
            <person name="Cieslewicz M.J."/>
            <person name="Eisen J.A."/>
            <person name="Peterson S.N."/>
            <person name="Wessels M.R."/>
            <person name="Paulsen I.T."/>
            <person name="Nelson K.E."/>
            <person name="Margarit I."/>
            <person name="Read T.D."/>
            <person name="Madoff L.C."/>
            <person name="Wolf A.M."/>
            <person name="Beanan M.J."/>
            <person name="Brinkac L.M."/>
            <person name="Daugherty S.C."/>
            <person name="DeBoy R.T."/>
            <person name="Durkin A.S."/>
            <person name="Kolonay J.F."/>
            <person name="Madupu R."/>
            <person name="Lewis M.R."/>
            <person name="Radune D."/>
            <person name="Fedorova N.B."/>
            <person name="Scanlan D."/>
            <person name="Khouri H.M."/>
            <person name="Mulligan S."/>
            <person name="Carty H.A."/>
            <person name="Cline R.T."/>
            <person name="Van Aken S.E."/>
            <person name="Gill J."/>
            <person name="Scarselli M."/>
            <person name="Mora M."/>
            <person name="Iacobini E.T."/>
            <person name="Brettoni C."/>
            <person name="Galli G."/>
            <person name="Mariani M."/>
            <person name="Vegni F."/>
            <person name="Maione D."/>
            <person name="Rinaudo D."/>
            <person name="Rappuoli R."/>
            <person name="Telford J.L."/>
            <person name="Kasper D.L."/>
            <person name="Grandi G."/>
            <person name="Fraser C.M."/>
        </authorList>
    </citation>
    <scope>NUCLEOTIDE SEQUENCE [LARGE SCALE GENOMIC DNA]</scope>
    <source>
        <strain>ATCC BAA-611 / 2603 V/R</strain>
    </source>
</reference>
<gene>
    <name evidence="1" type="primary">scpB</name>
    <name type="ordered locus">SAG1594</name>
</gene>
<dbReference type="EMBL" id="AE009948">
    <property type="protein sequence ID" value="AAN00458.1"/>
    <property type="molecule type" value="Genomic_DNA"/>
</dbReference>
<dbReference type="RefSeq" id="NP_688585.1">
    <property type="nucleotide sequence ID" value="NC_004116.1"/>
</dbReference>
<dbReference type="RefSeq" id="WP_000221690.1">
    <property type="nucleotide sequence ID" value="NC_004116.1"/>
</dbReference>
<dbReference type="SMR" id="Q7ZAL2"/>
<dbReference type="STRING" id="208435.SAG1594"/>
<dbReference type="GeneID" id="66886440"/>
<dbReference type="KEGG" id="sag:SAG1594"/>
<dbReference type="PATRIC" id="fig|208435.3.peg.1604"/>
<dbReference type="HOGENOM" id="CLU_045647_5_3_9"/>
<dbReference type="OrthoDB" id="9806226at2"/>
<dbReference type="Proteomes" id="UP000000821">
    <property type="component" value="Chromosome"/>
</dbReference>
<dbReference type="GO" id="GO:0005737">
    <property type="term" value="C:cytoplasm"/>
    <property type="evidence" value="ECO:0007669"/>
    <property type="project" value="UniProtKB-SubCell"/>
</dbReference>
<dbReference type="GO" id="GO:0051301">
    <property type="term" value="P:cell division"/>
    <property type="evidence" value="ECO:0007669"/>
    <property type="project" value="UniProtKB-KW"/>
</dbReference>
<dbReference type="GO" id="GO:0051304">
    <property type="term" value="P:chromosome separation"/>
    <property type="evidence" value="ECO:0007669"/>
    <property type="project" value="InterPro"/>
</dbReference>
<dbReference type="GO" id="GO:0006260">
    <property type="term" value="P:DNA replication"/>
    <property type="evidence" value="ECO:0007669"/>
    <property type="project" value="UniProtKB-UniRule"/>
</dbReference>
<dbReference type="Gene3D" id="1.10.10.10">
    <property type="entry name" value="Winged helix-like DNA-binding domain superfamily/Winged helix DNA-binding domain"/>
    <property type="match status" value="2"/>
</dbReference>
<dbReference type="HAMAP" id="MF_01804">
    <property type="entry name" value="ScpB"/>
    <property type="match status" value="1"/>
</dbReference>
<dbReference type="InterPro" id="IPR005234">
    <property type="entry name" value="ScpB_csome_segregation"/>
</dbReference>
<dbReference type="InterPro" id="IPR036388">
    <property type="entry name" value="WH-like_DNA-bd_sf"/>
</dbReference>
<dbReference type="InterPro" id="IPR036390">
    <property type="entry name" value="WH_DNA-bd_sf"/>
</dbReference>
<dbReference type="NCBIfam" id="TIGR00281">
    <property type="entry name" value="SMC-Scp complex subunit ScpB"/>
    <property type="match status" value="1"/>
</dbReference>
<dbReference type="PANTHER" id="PTHR34298">
    <property type="entry name" value="SEGREGATION AND CONDENSATION PROTEIN B"/>
    <property type="match status" value="1"/>
</dbReference>
<dbReference type="PANTHER" id="PTHR34298:SF2">
    <property type="entry name" value="SEGREGATION AND CONDENSATION PROTEIN B"/>
    <property type="match status" value="1"/>
</dbReference>
<dbReference type="Pfam" id="PF04079">
    <property type="entry name" value="SMC_ScpB"/>
    <property type="match status" value="1"/>
</dbReference>
<dbReference type="PIRSF" id="PIRSF019345">
    <property type="entry name" value="ScpB"/>
    <property type="match status" value="1"/>
</dbReference>
<dbReference type="SUPFAM" id="SSF46785">
    <property type="entry name" value="Winged helix' DNA-binding domain"/>
    <property type="match status" value="2"/>
</dbReference>
<keyword id="KW-0131">Cell cycle</keyword>
<keyword id="KW-0132">Cell division</keyword>
<keyword id="KW-0159">Chromosome partition</keyword>
<keyword id="KW-0963">Cytoplasm</keyword>
<keyword id="KW-1185">Reference proteome</keyword>
<accession>Q7ZAL2</accession>